<accession>Q6G0M7</accession>
<proteinExistence type="inferred from homology"/>
<gene>
    <name type="ordered locus">BQ02190</name>
</gene>
<comment type="function">
    <text evidence="1">Binds to DNA and alters its conformation. May be involved in regulation of gene expression, nucleoid organization and DNA protection.</text>
</comment>
<comment type="subunit">
    <text evidence="1">Homodimer.</text>
</comment>
<comment type="subcellular location">
    <subcellularLocation>
        <location evidence="1">Cytoplasm</location>
        <location evidence="1">Nucleoid</location>
    </subcellularLocation>
</comment>
<comment type="similarity">
    <text evidence="1">Belongs to the YbaB/EbfC family.</text>
</comment>
<organism>
    <name type="scientific">Bartonella quintana (strain Toulouse)</name>
    <name type="common">Rochalimaea quintana</name>
    <dbReference type="NCBI Taxonomy" id="283165"/>
    <lineage>
        <taxon>Bacteria</taxon>
        <taxon>Pseudomonadati</taxon>
        <taxon>Pseudomonadota</taxon>
        <taxon>Alphaproteobacteria</taxon>
        <taxon>Hyphomicrobiales</taxon>
        <taxon>Bartonellaceae</taxon>
        <taxon>Bartonella</taxon>
    </lineage>
</organism>
<evidence type="ECO:0000255" key="1">
    <source>
        <dbReference type="HAMAP-Rule" id="MF_00274"/>
    </source>
</evidence>
<protein>
    <recommendedName>
        <fullName evidence="1">Nucleoid-associated protein BQ02190</fullName>
    </recommendedName>
</protein>
<name>Y219_BARQU</name>
<sequence length="108" mass="11973">MRDMMSMMKKAKEIQEKMQQIQEEMTNLQMIGTAGGGLINVTLNGKNTITAIKIDPSLLKPEESEILEDLIMAAHNDAKTKIEIAMEEKTKSMTAGLPLPSGFKFPFS</sequence>
<feature type="chain" id="PRO_1000003690" description="Nucleoid-associated protein BQ02190">
    <location>
        <begin position="1"/>
        <end position="108"/>
    </location>
</feature>
<reference key="1">
    <citation type="journal article" date="2004" name="Proc. Natl. Acad. Sci. U.S.A.">
        <title>The louse-borne human pathogen Bartonella quintana is a genomic derivative of the zoonotic agent Bartonella henselae.</title>
        <authorList>
            <person name="Alsmark U.C.M."/>
            <person name="Frank A.C."/>
            <person name="Karlberg E.O."/>
            <person name="Legault B.-A."/>
            <person name="Ardell D.H."/>
            <person name="Canbaeck B."/>
            <person name="Eriksson A.-S."/>
            <person name="Naeslund A.K."/>
            <person name="Handley S.A."/>
            <person name="Huvet M."/>
            <person name="La Scola B."/>
            <person name="Holmberg M."/>
            <person name="Andersson S.G.E."/>
        </authorList>
    </citation>
    <scope>NUCLEOTIDE SEQUENCE [LARGE SCALE GENOMIC DNA]</scope>
    <source>
        <strain>Toulouse</strain>
    </source>
</reference>
<keyword id="KW-0963">Cytoplasm</keyword>
<keyword id="KW-0238">DNA-binding</keyword>
<dbReference type="EMBL" id="BX897700">
    <property type="protein sequence ID" value="CAF25722.1"/>
    <property type="molecule type" value="Genomic_DNA"/>
</dbReference>
<dbReference type="RefSeq" id="WP_011179036.1">
    <property type="nucleotide sequence ID" value="NC_005955.1"/>
</dbReference>
<dbReference type="SMR" id="Q6G0M7"/>
<dbReference type="KEGG" id="bqu:BQ02190"/>
<dbReference type="eggNOG" id="COG0718">
    <property type="taxonomic scope" value="Bacteria"/>
</dbReference>
<dbReference type="HOGENOM" id="CLU_140930_0_1_5"/>
<dbReference type="OrthoDB" id="9803080at2"/>
<dbReference type="Proteomes" id="UP000000597">
    <property type="component" value="Chromosome"/>
</dbReference>
<dbReference type="GO" id="GO:0043590">
    <property type="term" value="C:bacterial nucleoid"/>
    <property type="evidence" value="ECO:0007669"/>
    <property type="project" value="UniProtKB-UniRule"/>
</dbReference>
<dbReference type="GO" id="GO:0005829">
    <property type="term" value="C:cytosol"/>
    <property type="evidence" value="ECO:0007669"/>
    <property type="project" value="TreeGrafter"/>
</dbReference>
<dbReference type="GO" id="GO:0003677">
    <property type="term" value="F:DNA binding"/>
    <property type="evidence" value="ECO:0007669"/>
    <property type="project" value="UniProtKB-UniRule"/>
</dbReference>
<dbReference type="Gene3D" id="3.30.1310.10">
    <property type="entry name" value="Nucleoid-associated protein YbaB-like domain"/>
    <property type="match status" value="1"/>
</dbReference>
<dbReference type="HAMAP" id="MF_00274">
    <property type="entry name" value="DNA_YbaB_EbfC"/>
    <property type="match status" value="1"/>
</dbReference>
<dbReference type="InterPro" id="IPR036894">
    <property type="entry name" value="YbaB-like_sf"/>
</dbReference>
<dbReference type="InterPro" id="IPR004401">
    <property type="entry name" value="YbaB/EbfC"/>
</dbReference>
<dbReference type="NCBIfam" id="TIGR00103">
    <property type="entry name" value="DNA_YbaB_EbfC"/>
    <property type="match status" value="1"/>
</dbReference>
<dbReference type="PANTHER" id="PTHR33449">
    <property type="entry name" value="NUCLEOID-ASSOCIATED PROTEIN YBAB"/>
    <property type="match status" value="1"/>
</dbReference>
<dbReference type="PANTHER" id="PTHR33449:SF1">
    <property type="entry name" value="NUCLEOID-ASSOCIATED PROTEIN YBAB"/>
    <property type="match status" value="1"/>
</dbReference>
<dbReference type="Pfam" id="PF02575">
    <property type="entry name" value="YbaB_DNA_bd"/>
    <property type="match status" value="1"/>
</dbReference>
<dbReference type="PIRSF" id="PIRSF004555">
    <property type="entry name" value="UCP004555"/>
    <property type="match status" value="1"/>
</dbReference>
<dbReference type="SUPFAM" id="SSF82607">
    <property type="entry name" value="YbaB-like"/>
    <property type="match status" value="1"/>
</dbReference>